<evidence type="ECO:0000250" key="1"/>
<evidence type="ECO:0000255" key="2"/>
<evidence type="ECO:0000255" key="3">
    <source>
        <dbReference type="PROSITE-ProRule" id="PRU10088"/>
    </source>
</evidence>
<evidence type="ECO:0000255" key="4">
    <source>
        <dbReference type="PROSITE-ProRule" id="PRU10089"/>
    </source>
</evidence>
<evidence type="ECO:0000255" key="5">
    <source>
        <dbReference type="PROSITE-ProRule" id="PRU10090"/>
    </source>
</evidence>
<evidence type="ECO:0000269" key="6">
    <source>
    </source>
</evidence>
<evidence type="ECO:0000269" key="7">
    <source>
    </source>
</evidence>
<evidence type="ECO:0000305" key="8"/>
<reference key="1">
    <citation type="book" date="1993" name="Insect cell culture engineering">
        <title>Identification of a cysteine proteinase encoded by the Autographa californica nuclear polyhedrosis virus.</title>
        <editorList>
            <person name="Goosen M.F.A."/>
            <person name="Daugulis A.J."/>
            <person name="Faulkner P."/>
        </editorList>
        <authorList>
            <person name="Kuzio J."/>
            <person name="Faulkner P."/>
        </authorList>
    </citation>
    <scope>NUCLEOTIDE SEQUENCE [GENOMIC DNA]</scope>
    <source>
        <strain>C6</strain>
    </source>
</reference>
<reference key="2">
    <citation type="journal article" date="1994" name="Virology">
        <title>The complete DNA sequence of Autographa californica nuclear polyhedrosis virus.</title>
        <authorList>
            <person name="Ayres M.D."/>
            <person name="Howard S.C."/>
            <person name="Kuzio J."/>
            <person name="Lopez-Ferber M."/>
            <person name="Possee R.D."/>
        </authorList>
    </citation>
    <scope>NUCLEOTIDE SEQUENCE [LARGE SCALE GENOMIC DNA]</scope>
    <source>
        <strain>C6</strain>
    </source>
</reference>
<reference key="3">
    <citation type="journal article" date="1992" name="Biol. Chem. Hoppe-Seyler">
        <title>The baculovirus Autographa californica nuclear polyhedrosis virus genome includes a papain-like sequence.</title>
        <authorList>
            <person name="Rawlings N.D."/>
            <person name="Pearl L.H."/>
            <person name="Buttle D.J."/>
        </authorList>
    </citation>
    <scope>NUCLEOTIDE SEQUENCE [GENOMIC DNA] OF 118-323</scope>
</reference>
<reference key="4">
    <citation type="journal article" date="1995" name="Biol. Chem. Hoppe-Seyler">
        <title>The baculovirus cysteine protease has a cathepsin B-like S2-subsite specificity.</title>
        <authorList>
            <person name="Bromme D."/>
            <person name="Okamoto K."/>
        </authorList>
    </citation>
    <scope>CHARACTERIZATION</scope>
</reference>
<reference key="5">
    <citation type="journal article" date="1995" name="J. Gen. Virol.">
        <title>Characterization of v-cath, a cathepsin L-like proteinase expressed by the baculovirus Autographa californica multiple nuclear polyhedrosis virus.</title>
        <authorList>
            <person name="Slack J.M."/>
            <person name="Kuzio J."/>
            <person name="Faulkner P."/>
        </authorList>
    </citation>
    <scope>CHARACTERIZATION</scope>
</reference>
<reference key="6">
    <citation type="journal article" date="2002" name="Virology">
        <title>Autographa californica M nucleopolyhedrovirus ProV-CATH is activated during infected cell death.</title>
        <authorList>
            <person name="Hom L.G."/>
            <person name="Ohkawa T."/>
            <person name="Trudeau D."/>
            <person name="Volkman L.E."/>
        </authorList>
    </citation>
    <scope>PROTEOLYTIC CLEAVAGE</scope>
    <scope>FUNCTION</scope>
</reference>
<reference key="7">
    <citation type="journal article" date="2011" name="J. Virol.">
        <title>Interaction of Autographa californica multiple nucleopolyhedrovirus cathepsin protease progenitor (proV-CATH) with insect baculovirus chitinase as a mechanism for proV-CATH cellular retention.</title>
        <authorList>
            <person name="Hodgson J.J."/>
            <person name="Arif B.M."/>
            <person name="Krell P.J."/>
        </authorList>
    </citation>
    <scope>SUBCELLULAR LOCATION</scope>
    <scope>INTERACTION WITH CHIA</scope>
</reference>
<keyword id="KW-1015">Disulfide bond</keyword>
<keyword id="KW-0325">Glycoprotein</keyword>
<keyword id="KW-1038">Host endoplasmic reticulum</keyword>
<keyword id="KW-0378">Hydrolase</keyword>
<keyword id="KW-0645">Protease</keyword>
<keyword id="KW-1185">Reference proteome</keyword>
<keyword id="KW-0732">Signal</keyword>
<keyword id="KW-0788">Thiol protease</keyword>
<keyword id="KW-0865">Zymogen</keyword>
<proteinExistence type="evidence at protein level"/>
<protein>
    <recommendedName>
        <fullName>Viral cathepsin</fullName>
        <shortName>V-cath</shortName>
        <ecNumber>3.4.22.50</ecNumber>
    </recommendedName>
    <alternativeName>
        <fullName>Cysteine proteinase</fullName>
        <shortName>CP</shortName>
    </alternativeName>
</protein>
<comment type="function">
    <text evidence="6">Cysteine protease that plays an essential role in host liquefaction to facilitate horizontal transmission of the virus. Accumulates within infected cells as an inactive proenzyme (proV-CATH), which is activated by proteolytic cleavage upon cell death.</text>
</comment>
<comment type="catalytic activity">
    <reaction>
        <text>Endopeptidase of broad specificity, hydrolyzing substrates of both cathepsin L and cathepsin B.</text>
        <dbReference type="EC" id="3.4.22.50"/>
    </reaction>
</comment>
<comment type="biophysicochemical properties">
    <phDependence>
        <text>Optimum pH is 5.0-5.5.</text>
    </phDependence>
</comment>
<comment type="subunit">
    <text evidence="7">Interacts with chitinase/CHIA; this interaction maintains VCATH in the host endoplasmic reticulum.</text>
</comment>
<comment type="subcellular location">
    <subcellularLocation>
        <location evidence="7">Host endoplasmic reticulum</location>
    </subcellularLocation>
    <text evidence="7">Retained in the host reticulum by its interaction with chitinase/CHIA.</text>
</comment>
<comment type="PTM">
    <text evidence="6">Synthesized as an inactive proenzyme and activated by proteolytic removal of the inhibitory propeptide.</text>
</comment>
<comment type="similarity">
    <text evidence="3 4 5">Belongs to the peptidase C1 family.</text>
</comment>
<comment type="sequence caution" evidence="8">
    <conflict type="erroneous initiation">
        <sequence resource="EMBL-CDS" id="CAA49713"/>
    </conflict>
</comment>
<gene>
    <name type="primary">VCATH</name>
    <name type="ORF">ORF127</name>
</gene>
<accession>P25783</accession>
<accession>Q96589</accession>
<name>CATV_NPVAC</name>
<organismHost>
    <name type="scientific">Lepidoptera</name>
    <name type="common">butterflies and moths</name>
    <dbReference type="NCBI Taxonomy" id="7088"/>
</organismHost>
<feature type="signal peptide" evidence="2">
    <location>
        <begin position="1"/>
        <end position="16"/>
    </location>
</feature>
<feature type="propeptide" id="PRO_0000322201" description="Activation peptide" evidence="2">
    <location>
        <begin position="17"/>
        <end position="112"/>
    </location>
</feature>
<feature type="chain" id="PRO_0000050572" description="Viral cathepsin">
    <location>
        <begin position="113"/>
        <end position="323"/>
    </location>
</feature>
<feature type="active site" evidence="3">
    <location>
        <position position="136"/>
    </location>
</feature>
<feature type="active site" evidence="4">
    <location>
        <position position="269"/>
    </location>
</feature>
<feature type="active site" evidence="5">
    <location>
        <position position="289"/>
    </location>
</feature>
<feature type="glycosylation site" description="N-linked (GlcNAc...) asparagine; by host" evidence="2">
    <location>
        <position position="158"/>
    </location>
</feature>
<feature type="disulfide bond" evidence="1">
    <location>
        <begin position="133"/>
        <end position="174"/>
    </location>
</feature>
<feature type="disulfide bond" evidence="1">
    <location>
        <begin position="167"/>
        <end position="207"/>
    </location>
</feature>
<feature type="disulfide bond" evidence="1">
    <location>
        <begin position="262"/>
        <end position="310"/>
    </location>
</feature>
<dbReference type="EC" id="3.4.22.50"/>
<dbReference type="EMBL" id="M67451">
    <property type="protein sequence ID" value="AAA46752.1"/>
    <property type="molecule type" value="Genomic_DNA"/>
</dbReference>
<dbReference type="EMBL" id="L22858">
    <property type="protein sequence ID" value="AAA66757.1"/>
    <property type="molecule type" value="Genomic_DNA"/>
</dbReference>
<dbReference type="EMBL" id="X70124">
    <property type="protein sequence ID" value="CAA49713.1"/>
    <property type="status" value="ALT_INIT"/>
    <property type="molecule type" value="Genomic_DNA"/>
</dbReference>
<dbReference type="PIR" id="S62736">
    <property type="entry name" value="S62736"/>
</dbReference>
<dbReference type="SMR" id="P25783"/>
<dbReference type="MEROPS" id="C01.083"/>
<dbReference type="GlyCosmos" id="P25783">
    <property type="glycosylation" value="1 site, No reported glycans"/>
</dbReference>
<dbReference type="KEGG" id="vg:1403960"/>
<dbReference type="OrthoDB" id="4752at10239"/>
<dbReference type="BRENDA" id="3.4.22.50">
    <property type="organism ID" value="583"/>
</dbReference>
<dbReference type="Proteomes" id="UP000008292">
    <property type="component" value="Segment"/>
</dbReference>
<dbReference type="GO" id="GO:0044165">
    <property type="term" value="C:host cell endoplasmic reticulum"/>
    <property type="evidence" value="ECO:0007669"/>
    <property type="project" value="UniProtKB-SubCell"/>
</dbReference>
<dbReference type="GO" id="GO:0008234">
    <property type="term" value="F:cysteine-type peptidase activity"/>
    <property type="evidence" value="ECO:0007669"/>
    <property type="project" value="UniProtKB-KW"/>
</dbReference>
<dbReference type="GO" id="GO:0006508">
    <property type="term" value="P:proteolysis"/>
    <property type="evidence" value="ECO:0007669"/>
    <property type="project" value="UniProtKB-KW"/>
</dbReference>
<dbReference type="CDD" id="cd02248">
    <property type="entry name" value="Peptidase_C1A"/>
    <property type="match status" value="1"/>
</dbReference>
<dbReference type="Gene3D" id="3.90.70.10">
    <property type="entry name" value="Cysteine proteinases"/>
    <property type="match status" value="1"/>
</dbReference>
<dbReference type="InterPro" id="IPR038765">
    <property type="entry name" value="Papain-like_cys_pep_sf"/>
</dbReference>
<dbReference type="InterPro" id="IPR025661">
    <property type="entry name" value="Pept_asp_AS"/>
</dbReference>
<dbReference type="InterPro" id="IPR000169">
    <property type="entry name" value="Pept_cys_AS"/>
</dbReference>
<dbReference type="InterPro" id="IPR025660">
    <property type="entry name" value="Pept_his_AS"/>
</dbReference>
<dbReference type="InterPro" id="IPR013128">
    <property type="entry name" value="Peptidase_C1A"/>
</dbReference>
<dbReference type="InterPro" id="IPR000668">
    <property type="entry name" value="Peptidase_C1A_C"/>
</dbReference>
<dbReference type="InterPro" id="IPR039417">
    <property type="entry name" value="Peptidase_C1A_papain-like"/>
</dbReference>
<dbReference type="InterPro" id="IPR013201">
    <property type="entry name" value="Prot_inhib_I29"/>
</dbReference>
<dbReference type="PANTHER" id="PTHR12411">
    <property type="entry name" value="CYSTEINE PROTEASE FAMILY C1-RELATED"/>
    <property type="match status" value="1"/>
</dbReference>
<dbReference type="Pfam" id="PF08246">
    <property type="entry name" value="Inhibitor_I29"/>
    <property type="match status" value="1"/>
</dbReference>
<dbReference type="Pfam" id="PF00112">
    <property type="entry name" value="Peptidase_C1"/>
    <property type="match status" value="1"/>
</dbReference>
<dbReference type="PRINTS" id="PR00705">
    <property type="entry name" value="PAPAIN"/>
</dbReference>
<dbReference type="SMART" id="SM00848">
    <property type="entry name" value="Inhibitor_I29"/>
    <property type="match status" value="1"/>
</dbReference>
<dbReference type="SMART" id="SM00645">
    <property type="entry name" value="Pept_C1"/>
    <property type="match status" value="1"/>
</dbReference>
<dbReference type="SUPFAM" id="SSF54001">
    <property type="entry name" value="Cysteine proteinases"/>
    <property type="match status" value="1"/>
</dbReference>
<dbReference type="PROSITE" id="PS00640">
    <property type="entry name" value="THIOL_PROTEASE_ASN"/>
    <property type="match status" value="1"/>
</dbReference>
<dbReference type="PROSITE" id="PS00139">
    <property type="entry name" value="THIOL_PROTEASE_CYS"/>
    <property type="match status" value="1"/>
</dbReference>
<dbReference type="PROSITE" id="PS00639">
    <property type="entry name" value="THIOL_PROTEASE_HIS"/>
    <property type="match status" value="1"/>
</dbReference>
<organism>
    <name type="scientific">Autographa californica nuclear polyhedrosis virus</name>
    <name type="common">AcMNPV</name>
    <dbReference type="NCBI Taxonomy" id="46015"/>
    <lineage>
        <taxon>Viruses</taxon>
        <taxon>Viruses incertae sedis</taxon>
        <taxon>Naldaviricetes</taxon>
        <taxon>Lefavirales</taxon>
        <taxon>Baculoviridae</taxon>
        <taxon>Alphabaculovirus</taxon>
        <taxon>Alphabaculovirus aucalifornicae</taxon>
    </lineage>
</organism>
<sequence length="323" mass="36938">MNKILFYLFVYGVVNSAAYDLLKAPNYFEEFVHRFNKDYGSEVEKLRRFKIFQHNLNEIINKNQNDSAKYEINKFSDLSKDETIAKYTGLSLPIQTQNFCKVIVLDQPPGKGPLEFDWRRLNKVTSVKNQGMCGACWAFATLASLESQFAIKHNQLINLSEQQMIDCDFVDAGCNGGLLHTAFEAIIKMGGVQLESDYPYEADNNNCRMNSNKFLVQVKDCYRYITVYEEKLKDLLRLVGPIPMAIDAADIVNYKQGIIKYCFNSGLNHAVLLVGYGVENNIPYWTFKNTWGTDWGEDGFFRVQQNINACGMRNELASTAVIY</sequence>